<proteinExistence type="inferred from homology"/>
<keyword id="KW-0008">Acetylcholine receptor inhibiting toxin</keyword>
<keyword id="KW-1015">Disulfide bond</keyword>
<keyword id="KW-0872">Ion channel impairing toxin</keyword>
<keyword id="KW-0528">Neurotoxin</keyword>
<keyword id="KW-0629">Postsynaptic neurotoxin</keyword>
<keyword id="KW-0964">Secreted</keyword>
<keyword id="KW-0732">Signal</keyword>
<keyword id="KW-0800">Toxin</keyword>
<protein>
    <recommendedName>
        <fullName>Alpha-conotoxin-like Qc1.1b</fullName>
    </recommendedName>
    <alternativeName>
        <fullName>Qc1.3</fullName>
    </alternativeName>
</protein>
<organism>
    <name type="scientific">Conus quercinus</name>
    <name type="common">Oak cone</name>
    <dbReference type="NCBI Taxonomy" id="101313"/>
    <lineage>
        <taxon>Eukaryota</taxon>
        <taxon>Metazoa</taxon>
        <taxon>Spiralia</taxon>
        <taxon>Lophotrochozoa</taxon>
        <taxon>Mollusca</taxon>
        <taxon>Gastropoda</taxon>
        <taxon>Caenogastropoda</taxon>
        <taxon>Neogastropoda</taxon>
        <taxon>Conoidea</taxon>
        <taxon>Conidae</taxon>
        <taxon>Conus</taxon>
        <taxon>Lividoconus</taxon>
    </lineage>
</organism>
<reference key="1">
    <citation type="journal article" date="2007" name="Toxicon">
        <title>From the identification of gene organization of alpha conotoxins to the cloning of novel toxins.</title>
        <authorList>
            <person name="Yuan D.-D."/>
            <person name="Han Y.-H."/>
            <person name="Wang C.-G."/>
            <person name="Chi C.-W."/>
        </authorList>
    </citation>
    <scope>NUCLEOTIDE SEQUENCE [GENOMIC DNA / MRNA]</scope>
    <source>
        <tissue>Venom duct</tissue>
    </source>
</reference>
<accession>Q6PPB3</accession>
<accession>A1X8C4</accession>
<sequence>MGMRMMFTMFLLVVLAITVVSFTSDHASDGRNTAANDKASKLMALRNECCDNPPCKSSNPDLCDWRS</sequence>
<comment type="function">
    <text evidence="3">Alpha-conotoxins act on postsynaptic membranes, they bind to the nicotinic acetylcholine receptors (nAChR) and thus inhibit them (By similarity). Has possibly a distinct nAChR binding mode from other alpha-conotoxins, due to a different three residue motif (lacks the Ser-Xaa-Pro motif) (By similarity).</text>
</comment>
<comment type="subcellular location">
    <subcellularLocation>
        <location evidence="6">Secreted</location>
    </subcellularLocation>
</comment>
<comment type="tissue specificity">
    <text evidence="6">Expressed by the venom duct.</text>
</comment>
<comment type="domain">
    <text evidence="5">The cysteine framework is I (CC-C-C). Alpha4/7 pattern.</text>
</comment>
<comment type="similarity">
    <text evidence="5">Belongs to the conotoxin A superfamily.</text>
</comment>
<dbReference type="EMBL" id="AY588972">
    <property type="protein sequence ID" value="AAS99932.1"/>
    <property type="molecule type" value="mRNA"/>
</dbReference>
<dbReference type="EMBL" id="DQ311061">
    <property type="protein sequence ID" value="ABD33853.1"/>
    <property type="molecule type" value="mRNA"/>
</dbReference>
<dbReference type="EMBL" id="DQ311064">
    <property type="protein sequence ID" value="ABD33856.1"/>
    <property type="molecule type" value="Genomic_DNA"/>
</dbReference>
<dbReference type="SMR" id="Q6PPB3"/>
<dbReference type="ConoServer" id="551">
    <property type="toxin name" value="Qc1.1b precursor"/>
</dbReference>
<dbReference type="ConoServer" id="554">
    <property type="toxin name" value="Qc1.1b precursor"/>
</dbReference>
<dbReference type="GO" id="GO:0005576">
    <property type="term" value="C:extracellular region"/>
    <property type="evidence" value="ECO:0007669"/>
    <property type="project" value="UniProtKB-SubCell"/>
</dbReference>
<dbReference type="GO" id="GO:0035792">
    <property type="term" value="C:host cell postsynaptic membrane"/>
    <property type="evidence" value="ECO:0007669"/>
    <property type="project" value="UniProtKB-KW"/>
</dbReference>
<dbReference type="GO" id="GO:0030550">
    <property type="term" value="F:acetylcholine receptor inhibitor activity"/>
    <property type="evidence" value="ECO:0007669"/>
    <property type="project" value="UniProtKB-KW"/>
</dbReference>
<dbReference type="GO" id="GO:0099106">
    <property type="term" value="F:ion channel regulator activity"/>
    <property type="evidence" value="ECO:0007669"/>
    <property type="project" value="UniProtKB-KW"/>
</dbReference>
<dbReference type="GO" id="GO:0090729">
    <property type="term" value="F:toxin activity"/>
    <property type="evidence" value="ECO:0007669"/>
    <property type="project" value="UniProtKB-KW"/>
</dbReference>
<dbReference type="InterPro" id="IPR009958">
    <property type="entry name" value="Conotoxin_a-typ"/>
</dbReference>
<dbReference type="Pfam" id="PF07365">
    <property type="entry name" value="Toxin_8"/>
    <property type="match status" value="1"/>
</dbReference>
<evidence type="ECO:0000250" key="1"/>
<evidence type="ECO:0000250" key="2">
    <source>
        <dbReference type="UniProtKB" id="P56636"/>
    </source>
</evidence>
<evidence type="ECO:0000250" key="3">
    <source>
        <dbReference type="UniProtKB" id="Q2I2R8"/>
    </source>
</evidence>
<evidence type="ECO:0000255" key="4"/>
<evidence type="ECO:0000305" key="5"/>
<evidence type="ECO:0000305" key="6">
    <source>
    </source>
</evidence>
<name>CA11B_CONQU</name>
<feature type="signal peptide" evidence="4">
    <location>
        <begin position="1"/>
        <end position="21"/>
    </location>
</feature>
<feature type="propeptide" id="PRO_0000377449" evidence="1">
    <location>
        <begin position="22"/>
        <end position="46"/>
    </location>
</feature>
<feature type="peptide" id="PRO_0000377450" description="Alpha-conotoxin-like Qc1.1b">
    <location>
        <begin position="47"/>
        <end position="67"/>
    </location>
</feature>
<feature type="region of interest" description="Lacks the Ser-Xaa-Pro motif that is crucial for potent interaction with nAChR" evidence="5">
    <location>
        <begin position="51"/>
        <end position="53"/>
    </location>
</feature>
<feature type="disulfide bond" evidence="2">
    <location>
        <begin position="49"/>
        <end position="55"/>
    </location>
</feature>
<feature type="disulfide bond" evidence="2">
    <location>
        <begin position="50"/>
        <end position="63"/>
    </location>
</feature>